<protein>
    <recommendedName>
        <fullName evidence="1">Small ribosomal subunit protein uS8</fullName>
    </recommendedName>
    <alternativeName>
        <fullName evidence="2">30S ribosomal protein S8</fullName>
    </alternativeName>
</protein>
<gene>
    <name evidence="1" type="primary">rpsH</name>
    <name type="ordered locus">SPJ_0233</name>
</gene>
<name>RS8_STRZJ</name>
<keyword id="KW-0687">Ribonucleoprotein</keyword>
<keyword id="KW-0689">Ribosomal protein</keyword>
<keyword id="KW-0694">RNA-binding</keyword>
<keyword id="KW-0699">rRNA-binding</keyword>
<dbReference type="EMBL" id="CP000919">
    <property type="protein sequence ID" value="ACO19885.1"/>
    <property type="molecule type" value="Genomic_DNA"/>
</dbReference>
<dbReference type="RefSeq" id="WP_000245505.1">
    <property type="nucleotide sequence ID" value="NC_012466.1"/>
</dbReference>
<dbReference type="SMR" id="C1CC20"/>
<dbReference type="GeneID" id="45652295"/>
<dbReference type="KEGG" id="sjj:SPJ_0233"/>
<dbReference type="HOGENOM" id="CLU_098428_0_2_9"/>
<dbReference type="Proteomes" id="UP000002206">
    <property type="component" value="Chromosome"/>
</dbReference>
<dbReference type="GO" id="GO:1990904">
    <property type="term" value="C:ribonucleoprotein complex"/>
    <property type="evidence" value="ECO:0007669"/>
    <property type="project" value="UniProtKB-KW"/>
</dbReference>
<dbReference type="GO" id="GO:0005840">
    <property type="term" value="C:ribosome"/>
    <property type="evidence" value="ECO:0007669"/>
    <property type="project" value="UniProtKB-KW"/>
</dbReference>
<dbReference type="GO" id="GO:0019843">
    <property type="term" value="F:rRNA binding"/>
    <property type="evidence" value="ECO:0007669"/>
    <property type="project" value="UniProtKB-UniRule"/>
</dbReference>
<dbReference type="GO" id="GO:0003735">
    <property type="term" value="F:structural constituent of ribosome"/>
    <property type="evidence" value="ECO:0007669"/>
    <property type="project" value="InterPro"/>
</dbReference>
<dbReference type="GO" id="GO:0006412">
    <property type="term" value="P:translation"/>
    <property type="evidence" value="ECO:0007669"/>
    <property type="project" value="UniProtKB-UniRule"/>
</dbReference>
<dbReference type="FunFam" id="3.30.1370.30:FF:000002">
    <property type="entry name" value="30S ribosomal protein S8"/>
    <property type="match status" value="1"/>
</dbReference>
<dbReference type="FunFam" id="3.30.1490.10:FF:000001">
    <property type="entry name" value="30S ribosomal protein S8"/>
    <property type="match status" value="1"/>
</dbReference>
<dbReference type="Gene3D" id="3.30.1370.30">
    <property type="match status" value="1"/>
</dbReference>
<dbReference type="Gene3D" id="3.30.1490.10">
    <property type="match status" value="1"/>
</dbReference>
<dbReference type="HAMAP" id="MF_01302_B">
    <property type="entry name" value="Ribosomal_uS8_B"/>
    <property type="match status" value="1"/>
</dbReference>
<dbReference type="InterPro" id="IPR000630">
    <property type="entry name" value="Ribosomal_uS8"/>
</dbReference>
<dbReference type="InterPro" id="IPR047863">
    <property type="entry name" value="Ribosomal_uS8_CS"/>
</dbReference>
<dbReference type="InterPro" id="IPR035987">
    <property type="entry name" value="Ribosomal_uS8_sf"/>
</dbReference>
<dbReference type="NCBIfam" id="NF001109">
    <property type="entry name" value="PRK00136.1"/>
    <property type="match status" value="1"/>
</dbReference>
<dbReference type="PANTHER" id="PTHR11758">
    <property type="entry name" value="40S RIBOSOMAL PROTEIN S15A"/>
    <property type="match status" value="1"/>
</dbReference>
<dbReference type="Pfam" id="PF00410">
    <property type="entry name" value="Ribosomal_S8"/>
    <property type="match status" value="1"/>
</dbReference>
<dbReference type="SUPFAM" id="SSF56047">
    <property type="entry name" value="Ribosomal protein S8"/>
    <property type="match status" value="1"/>
</dbReference>
<dbReference type="PROSITE" id="PS00053">
    <property type="entry name" value="RIBOSOMAL_S8"/>
    <property type="match status" value="1"/>
</dbReference>
<organism>
    <name type="scientific">Streptococcus pneumoniae (strain JJA)</name>
    <dbReference type="NCBI Taxonomy" id="488222"/>
    <lineage>
        <taxon>Bacteria</taxon>
        <taxon>Bacillati</taxon>
        <taxon>Bacillota</taxon>
        <taxon>Bacilli</taxon>
        <taxon>Lactobacillales</taxon>
        <taxon>Streptococcaceae</taxon>
        <taxon>Streptococcus</taxon>
    </lineage>
</organism>
<proteinExistence type="inferred from homology"/>
<evidence type="ECO:0000255" key="1">
    <source>
        <dbReference type="HAMAP-Rule" id="MF_01302"/>
    </source>
</evidence>
<evidence type="ECO:0000305" key="2"/>
<sequence length="132" mass="14754">MVMTDPIADFLTRIRNANQAKHEVLEVPASNIKKGIAEILKREGFVKNVEIIEDDKQGVIRVFLKYGPNGEKVITNLKRVSKPGLRVYKKREDLPKVLNGLGIAILSTSEGLLTDKEARQKNVGGEVIAYVW</sequence>
<comment type="function">
    <text evidence="1">One of the primary rRNA binding proteins, it binds directly to 16S rRNA central domain where it helps coordinate assembly of the platform of the 30S subunit.</text>
</comment>
<comment type="subunit">
    <text evidence="1">Part of the 30S ribosomal subunit. Contacts proteins S5 and S12.</text>
</comment>
<comment type="similarity">
    <text evidence="1">Belongs to the universal ribosomal protein uS8 family.</text>
</comment>
<feature type="chain" id="PRO_1000165355" description="Small ribosomal subunit protein uS8">
    <location>
        <begin position="1"/>
        <end position="132"/>
    </location>
</feature>
<reference key="1">
    <citation type="journal article" date="2010" name="Genome Biol.">
        <title>Structure and dynamics of the pan-genome of Streptococcus pneumoniae and closely related species.</title>
        <authorList>
            <person name="Donati C."/>
            <person name="Hiller N.L."/>
            <person name="Tettelin H."/>
            <person name="Muzzi A."/>
            <person name="Croucher N.J."/>
            <person name="Angiuoli S.V."/>
            <person name="Oggioni M."/>
            <person name="Dunning Hotopp J.C."/>
            <person name="Hu F.Z."/>
            <person name="Riley D.R."/>
            <person name="Covacci A."/>
            <person name="Mitchell T.J."/>
            <person name="Bentley S.D."/>
            <person name="Kilian M."/>
            <person name="Ehrlich G.D."/>
            <person name="Rappuoli R."/>
            <person name="Moxon E.R."/>
            <person name="Masignani V."/>
        </authorList>
    </citation>
    <scope>NUCLEOTIDE SEQUENCE [LARGE SCALE GENOMIC DNA]</scope>
    <source>
        <strain>JJA</strain>
    </source>
</reference>
<accession>C1CC20</accession>